<dbReference type="EMBL" id="AF027868">
    <property type="protein sequence ID" value="AAB84465.1"/>
    <property type="status" value="ALT_INIT"/>
    <property type="molecule type" value="Genomic_DNA"/>
</dbReference>
<dbReference type="EMBL" id="AL009126">
    <property type="protein sequence ID" value="CAB13793.3"/>
    <property type="molecule type" value="Genomic_DNA"/>
</dbReference>
<dbReference type="PIR" id="D69899">
    <property type="entry name" value="D69899"/>
</dbReference>
<dbReference type="RefSeq" id="NP_389782.3">
    <property type="nucleotide sequence ID" value="NC_000964.3"/>
</dbReference>
<dbReference type="RefSeq" id="WP_004399321.1">
    <property type="nucleotide sequence ID" value="NZ_OZ025638.1"/>
</dbReference>
<dbReference type="SMR" id="O34377"/>
<dbReference type="FunCoup" id="O34377">
    <property type="interactions" value="15"/>
</dbReference>
<dbReference type="STRING" id="224308.BSU19010"/>
<dbReference type="PaxDb" id="224308-BSU19010"/>
<dbReference type="EnsemblBacteria" id="CAB13793">
    <property type="protein sequence ID" value="CAB13793"/>
    <property type="gene ID" value="BSU_19010"/>
</dbReference>
<dbReference type="GeneID" id="939634"/>
<dbReference type="KEGG" id="bsu:BSU19010"/>
<dbReference type="PATRIC" id="fig|224308.179.peg.2079"/>
<dbReference type="eggNOG" id="COG4282">
    <property type="taxonomic scope" value="Bacteria"/>
</dbReference>
<dbReference type="InParanoid" id="O34377"/>
<dbReference type="OrthoDB" id="2355620at2"/>
<dbReference type="BioCyc" id="BSUB:BSU19010-MONOMER"/>
<dbReference type="Proteomes" id="UP000001570">
    <property type="component" value="Chromosome"/>
</dbReference>
<dbReference type="Gene3D" id="3.40.1580.10">
    <property type="entry name" value="SMI1/KNR4-like"/>
    <property type="match status" value="1"/>
</dbReference>
<dbReference type="InterPro" id="IPR018958">
    <property type="entry name" value="Knr4/Smi1-like_dom"/>
</dbReference>
<dbReference type="InterPro" id="IPR037883">
    <property type="entry name" value="Knr4/Smi1-like_sf"/>
</dbReference>
<dbReference type="Pfam" id="PF09346">
    <property type="entry name" value="SMI1_KNR4"/>
    <property type="match status" value="1"/>
</dbReference>
<dbReference type="SMART" id="SM00860">
    <property type="entry name" value="SMI1_KNR4"/>
    <property type="match status" value="1"/>
</dbReference>
<dbReference type="SUPFAM" id="SSF160631">
    <property type="entry name" value="SMI1/KNR4-like"/>
    <property type="match status" value="1"/>
</dbReference>
<sequence length="185" mass="21655">MTNFVHKTVNGLKSLLDEKGAIKLFCSEGDIMEFLVTFSQDKATLNDIQSFEAKHQLTLPQDYQKFMTLHNGAKIFEILSDGENIGGGLQLFSLEEIEEELKYEDLFEDINGIPIGYLLEECHLMIDKDKVNQGDPNYLYIFESGLEYNPLNLNFEKFLDRYILANGEPFWDWRYYTAENYYRTR</sequence>
<accession>O34377</accession>
<accession>Q796E1</accession>
<protein>
    <recommendedName>
        <fullName>Uncharacterized protein YobM</fullName>
    </recommendedName>
</protein>
<proteinExistence type="predicted"/>
<evidence type="ECO:0000305" key="1"/>
<feature type="chain" id="PRO_0000359963" description="Uncharacterized protein YobM">
    <location>
        <begin position="1"/>
        <end position="185"/>
    </location>
</feature>
<keyword id="KW-1185">Reference proteome</keyword>
<comment type="sequence caution" evidence="1">
    <conflict type="erroneous initiation">
        <sequence resource="EMBL-CDS" id="AAB84465"/>
    </conflict>
    <text>Truncated N-terminus.</text>
</comment>
<name>YOBM_BACSU</name>
<reference key="1">
    <citation type="submission" date="1997-10" db="EMBL/GenBank/DDBJ databases">
        <title>Sequence analysis of the Bacillus subtilis chromosome region between the terC and odhAB loci cloned in a yeast artificial chromosome.</title>
        <authorList>
            <person name="Lapidus A."/>
            <person name="Galleron N."/>
            <person name="Sorokin A."/>
            <person name="Ehrlich S.D."/>
        </authorList>
    </citation>
    <scope>NUCLEOTIDE SEQUENCE [GENOMIC DNA]</scope>
</reference>
<reference key="2">
    <citation type="journal article" date="1997" name="Nature">
        <title>The complete genome sequence of the Gram-positive bacterium Bacillus subtilis.</title>
        <authorList>
            <person name="Kunst F."/>
            <person name="Ogasawara N."/>
            <person name="Moszer I."/>
            <person name="Albertini A.M."/>
            <person name="Alloni G."/>
            <person name="Azevedo V."/>
            <person name="Bertero M.G."/>
            <person name="Bessieres P."/>
            <person name="Bolotin A."/>
            <person name="Borchert S."/>
            <person name="Borriss R."/>
            <person name="Boursier L."/>
            <person name="Brans A."/>
            <person name="Braun M."/>
            <person name="Brignell S.C."/>
            <person name="Bron S."/>
            <person name="Brouillet S."/>
            <person name="Bruschi C.V."/>
            <person name="Caldwell B."/>
            <person name="Capuano V."/>
            <person name="Carter N.M."/>
            <person name="Choi S.-K."/>
            <person name="Codani J.-J."/>
            <person name="Connerton I.F."/>
            <person name="Cummings N.J."/>
            <person name="Daniel R.A."/>
            <person name="Denizot F."/>
            <person name="Devine K.M."/>
            <person name="Duesterhoeft A."/>
            <person name="Ehrlich S.D."/>
            <person name="Emmerson P.T."/>
            <person name="Entian K.-D."/>
            <person name="Errington J."/>
            <person name="Fabret C."/>
            <person name="Ferrari E."/>
            <person name="Foulger D."/>
            <person name="Fritz C."/>
            <person name="Fujita M."/>
            <person name="Fujita Y."/>
            <person name="Fuma S."/>
            <person name="Galizzi A."/>
            <person name="Galleron N."/>
            <person name="Ghim S.-Y."/>
            <person name="Glaser P."/>
            <person name="Goffeau A."/>
            <person name="Golightly E.J."/>
            <person name="Grandi G."/>
            <person name="Guiseppi G."/>
            <person name="Guy B.J."/>
            <person name="Haga K."/>
            <person name="Haiech J."/>
            <person name="Harwood C.R."/>
            <person name="Henaut A."/>
            <person name="Hilbert H."/>
            <person name="Holsappel S."/>
            <person name="Hosono S."/>
            <person name="Hullo M.-F."/>
            <person name="Itaya M."/>
            <person name="Jones L.-M."/>
            <person name="Joris B."/>
            <person name="Karamata D."/>
            <person name="Kasahara Y."/>
            <person name="Klaerr-Blanchard M."/>
            <person name="Klein C."/>
            <person name="Kobayashi Y."/>
            <person name="Koetter P."/>
            <person name="Koningstein G."/>
            <person name="Krogh S."/>
            <person name="Kumano M."/>
            <person name="Kurita K."/>
            <person name="Lapidus A."/>
            <person name="Lardinois S."/>
            <person name="Lauber J."/>
            <person name="Lazarevic V."/>
            <person name="Lee S.-M."/>
            <person name="Levine A."/>
            <person name="Liu H."/>
            <person name="Masuda S."/>
            <person name="Mauel C."/>
            <person name="Medigue C."/>
            <person name="Medina N."/>
            <person name="Mellado R.P."/>
            <person name="Mizuno M."/>
            <person name="Moestl D."/>
            <person name="Nakai S."/>
            <person name="Noback M."/>
            <person name="Noone D."/>
            <person name="O'Reilly M."/>
            <person name="Ogawa K."/>
            <person name="Ogiwara A."/>
            <person name="Oudega B."/>
            <person name="Park S.-H."/>
            <person name="Parro V."/>
            <person name="Pohl T.M."/>
            <person name="Portetelle D."/>
            <person name="Porwollik S."/>
            <person name="Prescott A.M."/>
            <person name="Presecan E."/>
            <person name="Pujic P."/>
            <person name="Purnelle B."/>
            <person name="Rapoport G."/>
            <person name="Rey M."/>
            <person name="Reynolds S."/>
            <person name="Rieger M."/>
            <person name="Rivolta C."/>
            <person name="Rocha E."/>
            <person name="Roche B."/>
            <person name="Rose M."/>
            <person name="Sadaie Y."/>
            <person name="Sato T."/>
            <person name="Scanlan E."/>
            <person name="Schleich S."/>
            <person name="Schroeter R."/>
            <person name="Scoffone F."/>
            <person name="Sekiguchi J."/>
            <person name="Sekowska A."/>
            <person name="Seror S.J."/>
            <person name="Serror P."/>
            <person name="Shin B.-S."/>
            <person name="Soldo B."/>
            <person name="Sorokin A."/>
            <person name="Tacconi E."/>
            <person name="Takagi T."/>
            <person name="Takahashi H."/>
            <person name="Takemaru K."/>
            <person name="Takeuchi M."/>
            <person name="Tamakoshi A."/>
            <person name="Tanaka T."/>
            <person name="Terpstra P."/>
            <person name="Tognoni A."/>
            <person name="Tosato V."/>
            <person name="Uchiyama S."/>
            <person name="Vandenbol M."/>
            <person name="Vannier F."/>
            <person name="Vassarotti A."/>
            <person name="Viari A."/>
            <person name="Wambutt R."/>
            <person name="Wedler E."/>
            <person name="Wedler H."/>
            <person name="Weitzenegger T."/>
            <person name="Winters P."/>
            <person name="Wipat A."/>
            <person name="Yamamoto H."/>
            <person name="Yamane K."/>
            <person name="Yasumoto K."/>
            <person name="Yata K."/>
            <person name="Yoshida K."/>
            <person name="Yoshikawa H.-F."/>
            <person name="Zumstein E."/>
            <person name="Yoshikawa H."/>
            <person name="Danchin A."/>
        </authorList>
    </citation>
    <scope>NUCLEOTIDE SEQUENCE [LARGE SCALE GENOMIC DNA]</scope>
    <source>
        <strain>168</strain>
    </source>
</reference>
<gene>
    <name type="primary">yobM</name>
    <name type="ordered locus">BSU19010</name>
</gene>
<organism>
    <name type="scientific">Bacillus subtilis (strain 168)</name>
    <dbReference type="NCBI Taxonomy" id="224308"/>
    <lineage>
        <taxon>Bacteria</taxon>
        <taxon>Bacillati</taxon>
        <taxon>Bacillota</taxon>
        <taxon>Bacilli</taxon>
        <taxon>Bacillales</taxon>
        <taxon>Bacillaceae</taxon>
        <taxon>Bacillus</taxon>
    </lineage>
</organism>